<comment type="function">
    <text evidence="1">Cleaves peptides in various proteins in a process that requires ATP hydrolysis. Has a chymotrypsin-like activity. Plays a major role in the degradation of misfolded proteins.</text>
</comment>
<comment type="catalytic activity">
    <reaction evidence="1">
        <text>Hydrolysis of proteins to small peptides in the presence of ATP and magnesium. alpha-casein is the usual test substrate. In the absence of ATP, only oligopeptides shorter than five residues are hydrolyzed (such as succinyl-Leu-Tyr-|-NHMec, and Leu-Tyr-Leu-|-Tyr-Trp, in which cleavage of the -Tyr-|-Leu- and -Tyr-|-Trp bonds also occurs).</text>
        <dbReference type="EC" id="3.4.21.92"/>
    </reaction>
</comment>
<comment type="subunit">
    <text evidence="1">Fourteen ClpP subunits assemble into 2 heptameric rings which stack back to back to give a disk-like structure with a central cavity, resembling the structure of eukaryotic proteasomes.</text>
</comment>
<comment type="subcellular location">
    <subcellularLocation>
        <location evidence="1">Cytoplasm</location>
    </subcellularLocation>
</comment>
<comment type="similarity">
    <text evidence="1">Belongs to the peptidase S14 family.</text>
</comment>
<comment type="sequence caution" evidence="2">
    <conflict type="erroneous initiation">
        <sequence resource="EMBL-CDS" id="CAC30430"/>
    </conflict>
</comment>
<gene>
    <name evidence="1" type="primary">clpP1</name>
    <name type="synonym">clpP</name>
    <name type="ordered locus">ML1480</name>
</gene>
<name>CLPP1_MYCLE</name>
<dbReference type="EC" id="3.4.21.92" evidence="1"/>
<dbReference type="EMBL" id="AL583922">
    <property type="protein sequence ID" value="CAC30430.1"/>
    <property type="status" value="ALT_INIT"/>
    <property type="molecule type" value="Genomic_DNA"/>
</dbReference>
<dbReference type="PIR" id="A87094">
    <property type="entry name" value="A87094"/>
</dbReference>
<dbReference type="SMR" id="Q9CBY3"/>
<dbReference type="STRING" id="272631.gene:17575318"/>
<dbReference type="MEROPS" id="S14.008"/>
<dbReference type="KEGG" id="mle:ML1480"/>
<dbReference type="Leproma" id="ML1480"/>
<dbReference type="eggNOG" id="COG0740">
    <property type="taxonomic scope" value="Bacteria"/>
</dbReference>
<dbReference type="HOGENOM" id="CLU_058707_3_2_11"/>
<dbReference type="Proteomes" id="UP000000806">
    <property type="component" value="Chromosome"/>
</dbReference>
<dbReference type="GO" id="GO:0005737">
    <property type="term" value="C:cytoplasm"/>
    <property type="evidence" value="ECO:0007669"/>
    <property type="project" value="UniProtKB-SubCell"/>
</dbReference>
<dbReference type="GO" id="GO:0009368">
    <property type="term" value="C:endopeptidase Clp complex"/>
    <property type="evidence" value="ECO:0007669"/>
    <property type="project" value="TreeGrafter"/>
</dbReference>
<dbReference type="GO" id="GO:0004176">
    <property type="term" value="F:ATP-dependent peptidase activity"/>
    <property type="evidence" value="ECO:0007669"/>
    <property type="project" value="InterPro"/>
</dbReference>
<dbReference type="GO" id="GO:0051117">
    <property type="term" value="F:ATPase binding"/>
    <property type="evidence" value="ECO:0007669"/>
    <property type="project" value="TreeGrafter"/>
</dbReference>
<dbReference type="GO" id="GO:0004252">
    <property type="term" value="F:serine-type endopeptidase activity"/>
    <property type="evidence" value="ECO:0007669"/>
    <property type="project" value="UniProtKB-UniRule"/>
</dbReference>
<dbReference type="GO" id="GO:0006515">
    <property type="term" value="P:protein quality control for misfolded or incompletely synthesized proteins"/>
    <property type="evidence" value="ECO:0007669"/>
    <property type="project" value="TreeGrafter"/>
</dbReference>
<dbReference type="CDD" id="cd07017">
    <property type="entry name" value="S14_ClpP_2"/>
    <property type="match status" value="1"/>
</dbReference>
<dbReference type="FunFam" id="3.90.226.10:FF:000002">
    <property type="entry name" value="ATP-dependent Clp protease proteolytic subunit"/>
    <property type="match status" value="1"/>
</dbReference>
<dbReference type="Gene3D" id="3.90.226.10">
    <property type="entry name" value="2-enoyl-CoA Hydratase, Chain A, domain 1"/>
    <property type="match status" value="1"/>
</dbReference>
<dbReference type="HAMAP" id="MF_00444">
    <property type="entry name" value="ClpP"/>
    <property type="match status" value="1"/>
</dbReference>
<dbReference type="InterPro" id="IPR001907">
    <property type="entry name" value="ClpP"/>
</dbReference>
<dbReference type="InterPro" id="IPR029045">
    <property type="entry name" value="ClpP/crotonase-like_dom_sf"/>
</dbReference>
<dbReference type="InterPro" id="IPR023562">
    <property type="entry name" value="ClpP/TepA"/>
</dbReference>
<dbReference type="InterPro" id="IPR033135">
    <property type="entry name" value="ClpP_His_AS"/>
</dbReference>
<dbReference type="NCBIfam" id="NF001368">
    <property type="entry name" value="PRK00277.1"/>
    <property type="match status" value="1"/>
</dbReference>
<dbReference type="NCBIfam" id="NF009205">
    <property type="entry name" value="PRK12553.1"/>
    <property type="match status" value="1"/>
</dbReference>
<dbReference type="PANTHER" id="PTHR10381">
    <property type="entry name" value="ATP-DEPENDENT CLP PROTEASE PROTEOLYTIC SUBUNIT"/>
    <property type="match status" value="1"/>
</dbReference>
<dbReference type="PANTHER" id="PTHR10381:SF70">
    <property type="entry name" value="ATP-DEPENDENT CLP PROTEASE PROTEOLYTIC SUBUNIT"/>
    <property type="match status" value="1"/>
</dbReference>
<dbReference type="Pfam" id="PF00574">
    <property type="entry name" value="CLP_protease"/>
    <property type="match status" value="1"/>
</dbReference>
<dbReference type="PRINTS" id="PR00127">
    <property type="entry name" value="CLPPROTEASEP"/>
</dbReference>
<dbReference type="SUPFAM" id="SSF52096">
    <property type="entry name" value="ClpP/crotonase"/>
    <property type="match status" value="1"/>
</dbReference>
<dbReference type="PROSITE" id="PS00382">
    <property type="entry name" value="CLP_PROTEASE_HIS"/>
    <property type="match status" value="1"/>
</dbReference>
<organism>
    <name type="scientific">Mycobacterium leprae (strain TN)</name>
    <dbReference type="NCBI Taxonomy" id="272631"/>
    <lineage>
        <taxon>Bacteria</taxon>
        <taxon>Bacillati</taxon>
        <taxon>Actinomycetota</taxon>
        <taxon>Actinomycetes</taxon>
        <taxon>Mycobacteriales</taxon>
        <taxon>Mycobacteriaceae</taxon>
        <taxon>Mycobacterium</taxon>
    </lineage>
</organism>
<reference key="1">
    <citation type="journal article" date="2001" name="Nature">
        <title>Massive gene decay in the leprosy bacillus.</title>
        <authorList>
            <person name="Cole S.T."/>
            <person name="Eiglmeier K."/>
            <person name="Parkhill J."/>
            <person name="James K.D."/>
            <person name="Thomson N.R."/>
            <person name="Wheeler P.R."/>
            <person name="Honore N."/>
            <person name="Garnier T."/>
            <person name="Churcher C.M."/>
            <person name="Harris D.E."/>
            <person name="Mungall K.L."/>
            <person name="Basham D."/>
            <person name="Brown D."/>
            <person name="Chillingworth T."/>
            <person name="Connor R."/>
            <person name="Davies R.M."/>
            <person name="Devlin K."/>
            <person name="Duthoy S."/>
            <person name="Feltwell T."/>
            <person name="Fraser A."/>
            <person name="Hamlin N."/>
            <person name="Holroyd S."/>
            <person name="Hornsby T."/>
            <person name="Jagels K."/>
            <person name="Lacroix C."/>
            <person name="Maclean J."/>
            <person name="Moule S."/>
            <person name="Murphy L.D."/>
            <person name="Oliver K."/>
            <person name="Quail M.A."/>
            <person name="Rajandream M.A."/>
            <person name="Rutherford K.M."/>
            <person name="Rutter S."/>
            <person name="Seeger K."/>
            <person name="Simon S."/>
            <person name="Simmonds M."/>
            <person name="Skelton J."/>
            <person name="Squares R."/>
            <person name="Squares S."/>
            <person name="Stevens K."/>
            <person name="Taylor K."/>
            <person name="Whitehead S."/>
            <person name="Woodward J.R."/>
            <person name="Barrell B.G."/>
        </authorList>
    </citation>
    <scope>NUCLEOTIDE SEQUENCE [LARGE SCALE GENOMIC DNA]</scope>
    <source>
        <strain>TN</strain>
    </source>
</reference>
<proteinExistence type="inferred from homology"/>
<keyword id="KW-0963">Cytoplasm</keyword>
<keyword id="KW-0378">Hydrolase</keyword>
<keyword id="KW-0645">Protease</keyword>
<keyword id="KW-1185">Reference proteome</keyword>
<keyword id="KW-0720">Serine protease</keyword>
<accession>Q9CBY3</accession>
<feature type="chain" id="PRO_0000179592" description="ATP-dependent Clp protease proteolytic subunit 1">
    <location>
        <begin position="1"/>
        <end position="200"/>
    </location>
</feature>
<feature type="active site" description="Nucleophile" evidence="1">
    <location>
        <position position="98"/>
    </location>
</feature>
<feature type="active site" evidence="1">
    <location>
        <position position="123"/>
    </location>
</feature>
<protein>
    <recommendedName>
        <fullName evidence="1">ATP-dependent Clp protease proteolytic subunit 1</fullName>
        <ecNumber evidence="1">3.4.21.92</ecNumber>
    </recommendedName>
    <alternativeName>
        <fullName evidence="1">Endopeptidase Clp 1</fullName>
    </alternativeName>
</protein>
<sequence length="200" mass="21847">MGHVTDIRSNSQGFNLTDSVYERLLSERIIFLGSEVNDNIANRLCAQILLLAAEDAFKDISLYINSPGGSISAGMAIYDTMVLAPCDIATYAMGMAASMGEFLLAAGTRGKRYALPHARILMHQPLGGVTGSAADIAIQAEQFAVIKKEMFRLNAEFTGQPIERIEADSDRDRWFTASEALEYGFVDHIITRAHVNGEVQ</sequence>
<evidence type="ECO:0000255" key="1">
    <source>
        <dbReference type="HAMAP-Rule" id="MF_00444"/>
    </source>
</evidence>
<evidence type="ECO:0000305" key="2"/>